<keyword id="KW-0012">Acyltransferase</keyword>
<keyword id="KW-0963">Cytoplasm</keyword>
<keyword id="KW-0275">Fatty acid biosynthesis</keyword>
<keyword id="KW-0276">Fatty acid metabolism</keyword>
<keyword id="KW-0444">Lipid biosynthesis</keyword>
<keyword id="KW-0443">Lipid metabolism</keyword>
<keyword id="KW-0511">Multifunctional enzyme</keyword>
<keyword id="KW-0808">Transferase</keyword>
<organism>
    <name type="scientific">Rickettsia massiliae (strain Mtu5)</name>
    <dbReference type="NCBI Taxonomy" id="416276"/>
    <lineage>
        <taxon>Bacteria</taxon>
        <taxon>Pseudomonadati</taxon>
        <taxon>Pseudomonadota</taxon>
        <taxon>Alphaproteobacteria</taxon>
        <taxon>Rickettsiales</taxon>
        <taxon>Rickettsiaceae</taxon>
        <taxon>Rickettsieae</taxon>
        <taxon>Rickettsia</taxon>
        <taxon>spotted fever group</taxon>
    </lineage>
</organism>
<evidence type="ECO:0000255" key="1">
    <source>
        <dbReference type="HAMAP-Rule" id="MF_01815"/>
    </source>
</evidence>
<proteinExistence type="inferred from homology"/>
<protein>
    <recommendedName>
        <fullName evidence="1">Beta-ketoacyl-[acyl-carrier-protein] synthase III</fullName>
        <shortName evidence="1">Beta-ketoacyl-ACP synthase III</shortName>
        <shortName evidence="1">KAS III</shortName>
        <ecNumber evidence="1">2.3.1.180</ecNumber>
    </recommendedName>
    <alternativeName>
        <fullName evidence="1">3-oxoacyl-[acyl-carrier-protein] synthase 3</fullName>
    </alternativeName>
    <alternativeName>
        <fullName evidence="1">3-oxoacyl-[acyl-carrier-protein] synthase III</fullName>
    </alternativeName>
</protein>
<dbReference type="EC" id="2.3.1.180" evidence="1"/>
<dbReference type="EMBL" id="CP000683">
    <property type="protein sequence ID" value="ABV85199.1"/>
    <property type="molecule type" value="Genomic_DNA"/>
</dbReference>
<dbReference type="RefSeq" id="WP_012153161.1">
    <property type="nucleotide sequence ID" value="NC_009900.1"/>
</dbReference>
<dbReference type="SMR" id="A8F2R3"/>
<dbReference type="KEGG" id="rms:RMA_1216"/>
<dbReference type="HOGENOM" id="CLU_039592_3_1_5"/>
<dbReference type="UniPathway" id="UPA00094"/>
<dbReference type="Proteomes" id="UP000001311">
    <property type="component" value="Chromosome"/>
</dbReference>
<dbReference type="GO" id="GO:0005737">
    <property type="term" value="C:cytoplasm"/>
    <property type="evidence" value="ECO:0007669"/>
    <property type="project" value="UniProtKB-SubCell"/>
</dbReference>
<dbReference type="GO" id="GO:0004315">
    <property type="term" value="F:3-oxoacyl-[acyl-carrier-protein] synthase activity"/>
    <property type="evidence" value="ECO:0007669"/>
    <property type="project" value="InterPro"/>
</dbReference>
<dbReference type="GO" id="GO:0033818">
    <property type="term" value="F:beta-ketoacyl-acyl-carrier-protein synthase III activity"/>
    <property type="evidence" value="ECO:0007669"/>
    <property type="project" value="UniProtKB-UniRule"/>
</dbReference>
<dbReference type="GO" id="GO:0006633">
    <property type="term" value="P:fatty acid biosynthetic process"/>
    <property type="evidence" value="ECO:0007669"/>
    <property type="project" value="UniProtKB-UniRule"/>
</dbReference>
<dbReference type="GO" id="GO:0044550">
    <property type="term" value="P:secondary metabolite biosynthetic process"/>
    <property type="evidence" value="ECO:0007669"/>
    <property type="project" value="TreeGrafter"/>
</dbReference>
<dbReference type="CDD" id="cd00830">
    <property type="entry name" value="KAS_III"/>
    <property type="match status" value="1"/>
</dbReference>
<dbReference type="FunFam" id="3.40.47.10:FF:000004">
    <property type="entry name" value="3-oxoacyl-[acyl-carrier-protein] synthase 3"/>
    <property type="match status" value="1"/>
</dbReference>
<dbReference type="Gene3D" id="3.40.47.10">
    <property type="match status" value="1"/>
</dbReference>
<dbReference type="HAMAP" id="MF_01815">
    <property type="entry name" value="FabH"/>
    <property type="match status" value="1"/>
</dbReference>
<dbReference type="InterPro" id="IPR013747">
    <property type="entry name" value="ACP_syn_III_C"/>
</dbReference>
<dbReference type="InterPro" id="IPR013751">
    <property type="entry name" value="ACP_syn_III_N"/>
</dbReference>
<dbReference type="InterPro" id="IPR004655">
    <property type="entry name" value="FabH"/>
</dbReference>
<dbReference type="InterPro" id="IPR016039">
    <property type="entry name" value="Thiolase-like"/>
</dbReference>
<dbReference type="NCBIfam" id="TIGR00747">
    <property type="entry name" value="fabH"/>
    <property type="match status" value="1"/>
</dbReference>
<dbReference type="NCBIfam" id="NF006829">
    <property type="entry name" value="PRK09352.1"/>
    <property type="match status" value="1"/>
</dbReference>
<dbReference type="PANTHER" id="PTHR34069">
    <property type="entry name" value="3-OXOACYL-[ACYL-CARRIER-PROTEIN] SYNTHASE 3"/>
    <property type="match status" value="1"/>
</dbReference>
<dbReference type="PANTHER" id="PTHR34069:SF2">
    <property type="entry name" value="BETA-KETOACYL-[ACYL-CARRIER-PROTEIN] SYNTHASE III"/>
    <property type="match status" value="1"/>
</dbReference>
<dbReference type="Pfam" id="PF08545">
    <property type="entry name" value="ACP_syn_III"/>
    <property type="match status" value="1"/>
</dbReference>
<dbReference type="Pfam" id="PF08541">
    <property type="entry name" value="ACP_syn_III_C"/>
    <property type="match status" value="1"/>
</dbReference>
<dbReference type="SUPFAM" id="SSF53901">
    <property type="entry name" value="Thiolase-like"/>
    <property type="match status" value="1"/>
</dbReference>
<gene>
    <name evidence="1" type="primary">fabH</name>
    <name type="ordered locus">RMA_1216</name>
</gene>
<comment type="function">
    <text evidence="1">Catalyzes the condensation reaction of fatty acid synthesis by the addition to an acyl acceptor of two carbons from malonyl-ACP. Catalyzes the first condensation reaction which initiates fatty acid synthesis and may therefore play a role in governing the total rate of fatty acid production. Possesses both acetoacetyl-ACP synthase and acetyl transacylase activities. Its substrate specificity determines the biosynthesis of branched-chain and/or straight-chain of fatty acids.</text>
</comment>
<comment type="catalytic activity">
    <reaction evidence="1">
        <text>malonyl-[ACP] + acetyl-CoA + H(+) = 3-oxobutanoyl-[ACP] + CO2 + CoA</text>
        <dbReference type="Rhea" id="RHEA:12080"/>
        <dbReference type="Rhea" id="RHEA-COMP:9623"/>
        <dbReference type="Rhea" id="RHEA-COMP:9625"/>
        <dbReference type="ChEBI" id="CHEBI:15378"/>
        <dbReference type="ChEBI" id="CHEBI:16526"/>
        <dbReference type="ChEBI" id="CHEBI:57287"/>
        <dbReference type="ChEBI" id="CHEBI:57288"/>
        <dbReference type="ChEBI" id="CHEBI:78449"/>
        <dbReference type="ChEBI" id="CHEBI:78450"/>
        <dbReference type="EC" id="2.3.1.180"/>
    </reaction>
</comment>
<comment type="pathway">
    <text evidence="1">Lipid metabolism; fatty acid biosynthesis.</text>
</comment>
<comment type="subunit">
    <text evidence="1">Homodimer.</text>
</comment>
<comment type="subcellular location">
    <subcellularLocation>
        <location evidence="1">Cytoplasm</location>
    </subcellularLocation>
</comment>
<comment type="domain">
    <text evidence="1">The last Arg residue of the ACP-binding site is essential for the weak association between ACP/AcpP and FabH.</text>
</comment>
<comment type="similarity">
    <text evidence="1">Belongs to the thiolase-like superfamily. FabH family.</text>
</comment>
<name>FABH_RICM5</name>
<accession>A8F2R3</accession>
<reference key="1">
    <citation type="journal article" date="2007" name="Genome Res.">
        <title>Lateral gene transfer between obligate intracellular bacteria: evidence from the Rickettsia massiliae genome.</title>
        <authorList>
            <person name="Blanc G."/>
            <person name="Ogata H."/>
            <person name="Robert C."/>
            <person name="Audic S."/>
            <person name="Claverie J.-M."/>
            <person name="Raoult D."/>
        </authorList>
    </citation>
    <scope>NUCLEOTIDE SEQUENCE [LARGE SCALE GENOMIC DNA]</scope>
    <source>
        <strain>Mtu5</strain>
    </source>
</reference>
<feature type="chain" id="PRO_1000070243" description="Beta-ketoacyl-[acyl-carrier-protein] synthase III">
    <location>
        <begin position="1"/>
        <end position="317"/>
    </location>
</feature>
<feature type="region of interest" description="ACP-binding" evidence="1">
    <location>
        <begin position="245"/>
        <end position="249"/>
    </location>
</feature>
<feature type="active site" evidence="1">
    <location>
        <position position="112"/>
    </location>
</feature>
<feature type="active site" evidence="1">
    <location>
        <position position="244"/>
    </location>
</feature>
<feature type="active site" evidence="1">
    <location>
        <position position="274"/>
    </location>
</feature>
<sequence length="317" mass="34253">MTCKIIGCGGYLPSKIVSNDELAKFVDTNDAWIRTRTGITQRHIAGDTEYTSHLALESAEKAIADAGISVNDIDLIITCTTTPDNSFPSVASKLQGYLGLTNIPSFDLQAVCAGFVYGLQVANSLISSGKYKTILLIGAEKMTSLLDWNDRTTCVLFGDGAGSVILQRSRDDSGLIDSNIFSSGADYEILYTNGGVSMNGISGKIVMQGQKLFRHAIEKMQQSIKDLLHANQFSVSDIDYFIPHQANIRIINKLAELLNIEEHKVVKTVEKHANCSAASIPLALSTLKASGKIKKGDILLFSAIGAGLTWGSAFIRW</sequence>